<feature type="chain" id="PRO_0000093752" description="GMP reductase">
    <location>
        <begin position="1"/>
        <end position="326"/>
    </location>
</feature>
<feature type="active site" description="Thioimidate intermediate" evidence="1">
    <location>
        <position position="175"/>
    </location>
</feature>
<feature type="binding site" evidence="1">
    <location>
        <begin position="204"/>
        <end position="227"/>
    </location>
    <ligand>
        <name>NADP(+)</name>
        <dbReference type="ChEBI" id="CHEBI:58349"/>
    </ligand>
</feature>
<feature type="sequence conflict" description="In Ref. 1; CAB07955." evidence="2" ref="1">
    <original>Q</original>
    <variation>P</variation>
    <location>
        <position position="262"/>
    </location>
</feature>
<dbReference type="EC" id="1.7.1.7"/>
<dbReference type="EMBL" id="Z93939">
    <property type="protein sequence ID" value="CAB07955.1"/>
    <property type="molecule type" value="Genomic_DNA"/>
</dbReference>
<dbReference type="EMBL" id="AL009126">
    <property type="protein sequence ID" value="CAB15203.2"/>
    <property type="molecule type" value="Genomic_DNA"/>
</dbReference>
<dbReference type="PIR" id="C70015">
    <property type="entry name" value="C70015"/>
</dbReference>
<dbReference type="RefSeq" id="NP_391093.2">
    <property type="nucleotide sequence ID" value="NC_000964.3"/>
</dbReference>
<dbReference type="RefSeq" id="WP_003244278.1">
    <property type="nucleotide sequence ID" value="NZ_OZ025638.1"/>
</dbReference>
<dbReference type="SMR" id="O05269"/>
<dbReference type="FunCoup" id="O05269">
    <property type="interactions" value="115"/>
</dbReference>
<dbReference type="STRING" id="224308.BSU32130"/>
<dbReference type="PaxDb" id="224308-BSU32130"/>
<dbReference type="EnsemblBacteria" id="CAB15203">
    <property type="protein sequence ID" value="CAB15203"/>
    <property type="gene ID" value="BSU_32130"/>
</dbReference>
<dbReference type="GeneID" id="937189"/>
<dbReference type="KEGG" id="bsu:BSU32130"/>
<dbReference type="PATRIC" id="fig|224308.179.peg.3479"/>
<dbReference type="eggNOG" id="COG0516">
    <property type="taxonomic scope" value="Bacteria"/>
</dbReference>
<dbReference type="InParanoid" id="O05269"/>
<dbReference type="OrthoDB" id="9805398at2"/>
<dbReference type="PhylomeDB" id="O05269"/>
<dbReference type="BioCyc" id="BSUB:BSU32130-MONOMER"/>
<dbReference type="Proteomes" id="UP000001570">
    <property type="component" value="Chromosome"/>
</dbReference>
<dbReference type="GO" id="GO:1902560">
    <property type="term" value="C:GMP reductase complex"/>
    <property type="evidence" value="ECO:0007669"/>
    <property type="project" value="InterPro"/>
</dbReference>
<dbReference type="GO" id="GO:0003920">
    <property type="term" value="F:GMP reductase activity"/>
    <property type="evidence" value="ECO:0007669"/>
    <property type="project" value="UniProtKB-UniRule"/>
</dbReference>
<dbReference type="GO" id="GO:0006163">
    <property type="term" value="P:purine nucleotide metabolic process"/>
    <property type="evidence" value="ECO:0007669"/>
    <property type="project" value="UniProtKB-UniRule"/>
</dbReference>
<dbReference type="CDD" id="cd00381">
    <property type="entry name" value="IMPDH"/>
    <property type="match status" value="1"/>
</dbReference>
<dbReference type="FunFam" id="3.20.20.70:FF:000079">
    <property type="entry name" value="GMP reductase"/>
    <property type="match status" value="1"/>
</dbReference>
<dbReference type="Gene3D" id="3.20.20.70">
    <property type="entry name" value="Aldolase class I"/>
    <property type="match status" value="1"/>
</dbReference>
<dbReference type="HAMAP" id="MF_01511">
    <property type="entry name" value="GMP_reduct_type2"/>
    <property type="match status" value="1"/>
</dbReference>
<dbReference type="InterPro" id="IPR013785">
    <property type="entry name" value="Aldolase_TIM"/>
</dbReference>
<dbReference type="InterPro" id="IPR050139">
    <property type="entry name" value="GMP_reductase"/>
</dbReference>
<dbReference type="InterPro" id="IPR005994">
    <property type="entry name" value="GuaC_type_2"/>
</dbReference>
<dbReference type="InterPro" id="IPR015875">
    <property type="entry name" value="IMP_DH/GMP_Rdtase_CS"/>
</dbReference>
<dbReference type="InterPro" id="IPR001093">
    <property type="entry name" value="IMP_DH_GMPRt"/>
</dbReference>
<dbReference type="NCBIfam" id="TIGR01306">
    <property type="entry name" value="GMP_reduct_2"/>
    <property type="match status" value="1"/>
</dbReference>
<dbReference type="NCBIfam" id="NF003966">
    <property type="entry name" value="PRK05458.1"/>
    <property type="match status" value="1"/>
</dbReference>
<dbReference type="PANTHER" id="PTHR43170">
    <property type="entry name" value="GMP REDUCTASE"/>
    <property type="match status" value="1"/>
</dbReference>
<dbReference type="PANTHER" id="PTHR43170:SF5">
    <property type="entry name" value="GMP REDUCTASE"/>
    <property type="match status" value="1"/>
</dbReference>
<dbReference type="Pfam" id="PF00478">
    <property type="entry name" value="IMPDH"/>
    <property type="match status" value="1"/>
</dbReference>
<dbReference type="PIRSF" id="PIRSF036500">
    <property type="entry name" value="GMP_red_Firmic"/>
    <property type="match status" value="1"/>
</dbReference>
<dbReference type="SMART" id="SM01240">
    <property type="entry name" value="IMPDH"/>
    <property type="match status" value="1"/>
</dbReference>
<dbReference type="SUPFAM" id="SSF51412">
    <property type="entry name" value="Inosine monophosphate dehydrogenase (IMPDH)"/>
    <property type="match status" value="1"/>
</dbReference>
<dbReference type="PROSITE" id="PS00487">
    <property type="entry name" value="IMP_DH_GMP_RED"/>
    <property type="match status" value="1"/>
</dbReference>
<keyword id="KW-0521">NADP</keyword>
<keyword id="KW-0560">Oxidoreductase</keyword>
<keyword id="KW-1185">Reference proteome</keyword>
<comment type="function">
    <text evidence="2">Catalyzes the irreversible NADPH-dependent deamination of GMP to IMP. It functions in the conversion of nucleobase, nucleoside and nucleotide derivatives of G to A nucleotides, and in maintaining the intracellular balance of A and G nucleotides (Probable).</text>
</comment>
<comment type="catalytic activity">
    <reaction>
        <text>IMP + NH4(+) + NADP(+) = GMP + NADPH + 2 H(+)</text>
        <dbReference type="Rhea" id="RHEA:17185"/>
        <dbReference type="ChEBI" id="CHEBI:15378"/>
        <dbReference type="ChEBI" id="CHEBI:28938"/>
        <dbReference type="ChEBI" id="CHEBI:57783"/>
        <dbReference type="ChEBI" id="CHEBI:58053"/>
        <dbReference type="ChEBI" id="CHEBI:58115"/>
        <dbReference type="ChEBI" id="CHEBI:58349"/>
        <dbReference type="EC" id="1.7.1.7"/>
    </reaction>
</comment>
<comment type="induction">
    <text>Expression is regulated by PurR.</text>
</comment>
<comment type="similarity">
    <text evidence="2">Belongs to the IMPDH/GMPR family. GuaC type 2 subfamily.</text>
</comment>
<organism>
    <name type="scientific">Bacillus subtilis (strain 168)</name>
    <dbReference type="NCBI Taxonomy" id="224308"/>
    <lineage>
        <taxon>Bacteria</taxon>
        <taxon>Bacillati</taxon>
        <taxon>Bacillota</taxon>
        <taxon>Bacilli</taxon>
        <taxon>Bacillales</taxon>
        <taxon>Bacillaceae</taxon>
        <taxon>Bacillus</taxon>
    </lineage>
</organism>
<sequence>MENVFDYEDIQLIPAKCIVNSRSECDTSVRLGGHTFKLPVVPANMQTIIDEKLAISLAENGYFYVMHRFEPETRIDFIKDMNARGLFSSISVGVKDEEYEFVRQLAEENLTPEYVTIDIAHGHSNAVIEMIQHLKKHLPDSFVIAGNVGTPEAVRELENAGADATKVGIGPGKVCITKIKTGFGTGGWQLAALRWCAKAASKPIIADGGIRTHGDIAKSIRFGATMVMIGSLFAGHEESPGQTIEKDGKLYKEYFGSASEFQKGEKKNVEGKKMHVAHKGSIKDTLIEMEQDLQSSISYAGGTKLNAIRNVDYVIVKNSIFNGDKY</sequence>
<protein>
    <recommendedName>
        <fullName>GMP reductase</fullName>
        <ecNumber>1.7.1.7</ecNumber>
    </recommendedName>
    <alternativeName>
        <fullName>Guanosine 5'-monophosphate oxidoreductase</fullName>
        <shortName>Guanosine monophosphate reductase</shortName>
    </alternativeName>
</protein>
<evidence type="ECO:0000250" key="1"/>
<evidence type="ECO:0000305" key="2"/>
<accession>O05269</accession>
<reference key="1">
    <citation type="submission" date="1997-04" db="EMBL/GenBank/DDBJ databases">
        <authorList>
            <person name="Oudega B."/>
            <person name="Koningstein G."/>
            <person name="de Sales Ramon M."/>
            <person name="Rodrigues L."/>
        </authorList>
    </citation>
    <scope>NUCLEOTIDE SEQUENCE [GENOMIC DNA]</scope>
    <source>
        <strain>168</strain>
    </source>
</reference>
<reference key="2">
    <citation type="journal article" date="1997" name="Nature">
        <title>The complete genome sequence of the Gram-positive bacterium Bacillus subtilis.</title>
        <authorList>
            <person name="Kunst F."/>
            <person name="Ogasawara N."/>
            <person name="Moszer I."/>
            <person name="Albertini A.M."/>
            <person name="Alloni G."/>
            <person name="Azevedo V."/>
            <person name="Bertero M.G."/>
            <person name="Bessieres P."/>
            <person name="Bolotin A."/>
            <person name="Borchert S."/>
            <person name="Borriss R."/>
            <person name="Boursier L."/>
            <person name="Brans A."/>
            <person name="Braun M."/>
            <person name="Brignell S.C."/>
            <person name="Bron S."/>
            <person name="Brouillet S."/>
            <person name="Bruschi C.V."/>
            <person name="Caldwell B."/>
            <person name="Capuano V."/>
            <person name="Carter N.M."/>
            <person name="Choi S.-K."/>
            <person name="Codani J.-J."/>
            <person name="Connerton I.F."/>
            <person name="Cummings N.J."/>
            <person name="Daniel R.A."/>
            <person name="Denizot F."/>
            <person name="Devine K.M."/>
            <person name="Duesterhoeft A."/>
            <person name="Ehrlich S.D."/>
            <person name="Emmerson P.T."/>
            <person name="Entian K.-D."/>
            <person name="Errington J."/>
            <person name="Fabret C."/>
            <person name="Ferrari E."/>
            <person name="Foulger D."/>
            <person name="Fritz C."/>
            <person name="Fujita M."/>
            <person name="Fujita Y."/>
            <person name="Fuma S."/>
            <person name="Galizzi A."/>
            <person name="Galleron N."/>
            <person name="Ghim S.-Y."/>
            <person name="Glaser P."/>
            <person name="Goffeau A."/>
            <person name="Golightly E.J."/>
            <person name="Grandi G."/>
            <person name="Guiseppi G."/>
            <person name="Guy B.J."/>
            <person name="Haga K."/>
            <person name="Haiech J."/>
            <person name="Harwood C.R."/>
            <person name="Henaut A."/>
            <person name="Hilbert H."/>
            <person name="Holsappel S."/>
            <person name="Hosono S."/>
            <person name="Hullo M.-F."/>
            <person name="Itaya M."/>
            <person name="Jones L.-M."/>
            <person name="Joris B."/>
            <person name="Karamata D."/>
            <person name="Kasahara Y."/>
            <person name="Klaerr-Blanchard M."/>
            <person name="Klein C."/>
            <person name="Kobayashi Y."/>
            <person name="Koetter P."/>
            <person name="Koningstein G."/>
            <person name="Krogh S."/>
            <person name="Kumano M."/>
            <person name="Kurita K."/>
            <person name="Lapidus A."/>
            <person name="Lardinois S."/>
            <person name="Lauber J."/>
            <person name="Lazarevic V."/>
            <person name="Lee S.-M."/>
            <person name="Levine A."/>
            <person name="Liu H."/>
            <person name="Masuda S."/>
            <person name="Mauel C."/>
            <person name="Medigue C."/>
            <person name="Medina N."/>
            <person name="Mellado R.P."/>
            <person name="Mizuno M."/>
            <person name="Moestl D."/>
            <person name="Nakai S."/>
            <person name="Noback M."/>
            <person name="Noone D."/>
            <person name="O'Reilly M."/>
            <person name="Ogawa K."/>
            <person name="Ogiwara A."/>
            <person name="Oudega B."/>
            <person name="Park S.-H."/>
            <person name="Parro V."/>
            <person name="Pohl T.M."/>
            <person name="Portetelle D."/>
            <person name="Porwollik S."/>
            <person name="Prescott A.M."/>
            <person name="Presecan E."/>
            <person name="Pujic P."/>
            <person name="Purnelle B."/>
            <person name="Rapoport G."/>
            <person name="Rey M."/>
            <person name="Reynolds S."/>
            <person name="Rieger M."/>
            <person name="Rivolta C."/>
            <person name="Rocha E."/>
            <person name="Roche B."/>
            <person name="Rose M."/>
            <person name="Sadaie Y."/>
            <person name="Sato T."/>
            <person name="Scanlan E."/>
            <person name="Schleich S."/>
            <person name="Schroeter R."/>
            <person name="Scoffone F."/>
            <person name="Sekiguchi J."/>
            <person name="Sekowska A."/>
            <person name="Seror S.J."/>
            <person name="Serror P."/>
            <person name="Shin B.-S."/>
            <person name="Soldo B."/>
            <person name="Sorokin A."/>
            <person name="Tacconi E."/>
            <person name="Takagi T."/>
            <person name="Takahashi H."/>
            <person name="Takemaru K."/>
            <person name="Takeuchi M."/>
            <person name="Tamakoshi A."/>
            <person name="Tanaka T."/>
            <person name="Terpstra P."/>
            <person name="Tognoni A."/>
            <person name="Tosato V."/>
            <person name="Uchiyama S."/>
            <person name="Vandenbol M."/>
            <person name="Vannier F."/>
            <person name="Vassarotti A."/>
            <person name="Viari A."/>
            <person name="Wambutt R."/>
            <person name="Wedler E."/>
            <person name="Wedler H."/>
            <person name="Weitzenegger T."/>
            <person name="Winters P."/>
            <person name="Wipat A."/>
            <person name="Yamamoto H."/>
            <person name="Yamane K."/>
            <person name="Yasumoto K."/>
            <person name="Yata K."/>
            <person name="Yoshida K."/>
            <person name="Yoshikawa H.-F."/>
            <person name="Zumstein E."/>
            <person name="Yoshikawa H."/>
            <person name="Danchin A."/>
        </authorList>
    </citation>
    <scope>NUCLEOTIDE SEQUENCE [LARGE SCALE GENOMIC DNA]</scope>
    <source>
        <strain>168</strain>
    </source>
</reference>
<reference key="3">
    <citation type="journal article" date="2009" name="Microbiology">
        <title>From a consortium sequence to a unified sequence: the Bacillus subtilis 168 reference genome a decade later.</title>
        <authorList>
            <person name="Barbe V."/>
            <person name="Cruveiller S."/>
            <person name="Kunst F."/>
            <person name="Lenoble P."/>
            <person name="Meurice G."/>
            <person name="Sekowska A."/>
            <person name="Vallenet D."/>
            <person name="Wang T."/>
            <person name="Moszer I."/>
            <person name="Medigue C."/>
            <person name="Danchin A."/>
        </authorList>
    </citation>
    <scope>SEQUENCE REVISION TO 262</scope>
</reference>
<reference key="4">
    <citation type="journal article" date="2001" name="J. Bacteriol.">
        <title>Definition of the Bacillus subtilis PurR operator using genetic and bioinformatic tools and expansion of the PurR regulon with glyA, guaC, pbuG, xpt-pbuX, yqhZ-folD, and pbuO.</title>
        <authorList>
            <person name="Saxild H.H."/>
            <person name="Brunstedt K."/>
            <person name="Nielsen K.I."/>
            <person name="Jarmer H."/>
            <person name="Nygaard P."/>
        </authorList>
    </citation>
    <scope>PROBABLE FUNCTION</scope>
    <scope>REGULATION OF EXPRESSION</scope>
    <source>
        <strain>168</strain>
    </source>
</reference>
<proteinExistence type="evidence at transcript level"/>
<name>GUAC_BACSU</name>
<gene>
    <name type="primary">guaC</name>
    <name type="synonym">yumD</name>
    <name type="ordered locus">BSU32130</name>
</gene>